<dbReference type="EC" id="3.1.2.-"/>
<dbReference type="EMBL" id="K00431">
    <property type="protein sequence ID" value="AAB59067.1"/>
    <property type="molecule type" value="Genomic_DNA"/>
</dbReference>
<dbReference type="EMBL" id="U24195">
    <property type="protein sequence ID" value="AAB60068.1"/>
    <property type="molecule type" value="Genomic_DNA"/>
</dbReference>
<dbReference type="EMBL" id="U24196">
    <property type="protein sequence ID" value="AAB60076.1"/>
    <property type="molecule type" value="Genomic_DNA"/>
</dbReference>
<dbReference type="EMBL" id="U24197">
    <property type="protein sequence ID" value="AAB60084.1"/>
    <property type="molecule type" value="Genomic_DNA"/>
</dbReference>
<dbReference type="EMBL" id="U24198">
    <property type="protein sequence ID" value="AAB60092.1"/>
    <property type="molecule type" value="Genomic_DNA"/>
</dbReference>
<dbReference type="EMBL" id="U24199">
    <property type="protein sequence ID" value="AAB60100.1"/>
    <property type="molecule type" value="Genomic_DNA"/>
</dbReference>
<dbReference type="EMBL" id="U24200">
    <property type="protein sequence ID" value="AAB60108.1"/>
    <property type="molecule type" value="Genomic_DNA"/>
</dbReference>
<dbReference type="EMBL" id="U24201">
    <property type="protein sequence ID" value="AAB60116.1"/>
    <property type="molecule type" value="Genomic_DNA"/>
</dbReference>
<dbReference type="EMBL" id="U24202">
    <property type="protein sequence ID" value="AAB60124.1"/>
    <property type="molecule type" value="Genomic_DNA"/>
</dbReference>
<dbReference type="EMBL" id="U24203">
    <property type="protein sequence ID" value="AAB60132.1"/>
    <property type="molecule type" value="Genomic_DNA"/>
</dbReference>
<dbReference type="EMBL" id="U24204">
    <property type="protein sequence ID" value="AAB60140.1"/>
    <property type="molecule type" value="Genomic_DNA"/>
</dbReference>
<dbReference type="EMBL" id="U24205">
    <property type="protein sequence ID" value="AAB60148.1"/>
    <property type="molecule type" value="Genomic_DNA"/>
</dbReference>
<dbReference type="EMBL" id="U24206">
    <property type="protein sequence ID" value="AAB60156.1"/>
    <property type="molecule type" value="Genomic_DNA"/>
</dbReference>
<dbReference type="EMBL" id="U00096">
    <property type="protein sequence ID" value="AAC74335.1"/>
    <property type="molecule type" value="Genomic_DNA"/>
</dbReference>
<dbReference type="EMBL" id="AP009048">
    <property type="protein sequence ID" value="BAA14785.1"/>
    <property type="molecule type" value="Genomic_DNA"/>
</dbReference>
<dbReference type="PIR" id="A05224">
    <property type="entry name" value="A05224"/>
</dbReference>
<dbReference type="RefSeq" id="NP_415769.1">
    <property type="nucleotide sequence ID" value="NC_000913.3"/>
</dbReference>
<dbReference type="RefSeq" id="WP_000108160.1">
    <property type="nucleotide sequence ID" value="NZ_STEB01000005.1"/>
</dbReference>
<dbReference type="SMR" id="P0A8Z0"/>
<dbReference type="BioGRID" id="4262997">
    <property type="interactions" value="35"/>
</dbReference>
<dbReference type="DIP" id="DIP-35956N"/>
<dbReference type="FunCoup" id="P0A8Z0">
    <property type="interactions" value="277"/>
</dbReference>
<dbReference type="IntAct" id="P0A8Z0">
    <property type="interactions" value="14"/>
</dbReference>
<dbReference type="STRING" id="511145.b1253"/>
<dbReference type="jPOST" id="P0A8Z0"/>
<dbReference type="PaxDb" id="511145-b1253"/>
<dbReference type="EnsemblBacteria" id="AAC74335">
    <property type="protein sequence ID" value="AAC74335"/>
    <property type="gene ID" value="b1253"/>
</dbReference>
<dbReference type="GeneID" id="93775322"/>
<dbReference type="GeneID" id="946634"/>
<dbReference type="KEGG" id="ecj:JW1245"/>
<dbReference type="KEGG" id="eco:b1253"/>
<dbReference type="KEGG" id="ecoc:C3026_07360"/>
<dbReference type="PATRIC" id="fig|1411691.4.peg.1030"/>
<dbReference type="EchoBASE" id="EB1111"/>
<dbReference type="eggNOG" id="COG1607">
    <property type="taxonomic scope" value="Bacteria"/>
</dbReference>
<dbReference type="HOGENOM" id="CLU_050164_2_0_6"/>
<dbReference type="InParanoid" id="P0A8Z0"/>
<dbReference type="OMA" id="MDEMAFL"/>
<dbReference type="OrthoDB" id="9801856at2"/>
<dbReference type="PhylomeDB" id="P0A8Z0"/>
<dbReference type="BioCyc" id="EcoCyc:EG11121-MONOMER"/>
<dbReference type="BioCyc" id="MetaCyc:EG11121-MONOMER"/>
<dbReference type="BRENDA" id="3.1.2.2">
    <property type="organism ID" value="2026"/>
</dbReference>
<dbReference type="BRENDA" id="3.1.2.20">
    <property type="organism ID" value="2026"/>
</dbReference>
<dbReference type="PRO" id="PR:P0A8Z0"/>
<dbReference type="Proteomes" id="UP000000625">
    <property type="component" value="Chromosome"/>
</dbReference>
<dbReference type="GO" id="GO:0005737">
    <property type="term" value="C:cytoplasm"/>
    <property type="evidence" value="ECO:0000318"/>
    <property type="project" value="GO_Central"/>
</dbReference>
<dbReference type="GO" id="GO:0005829">
    <property type="term" value="C:cytosol"/>
    <property type="evidence" value="ECO:0000318"/>
    <property type="project" value="GO_Central"/>
</dbReference>
<dbReference type="GO" id="GO:0052816">
    <property type="term" value="F:long-chain fatty acyl-CoA hydrolase activity"/>
    <property type="evidence" value="ECO:0000314"/>
    <property type="project" value="EcoCyc"/>
</dbReference>
<dbReference type="GO" id="GO:0006637">
    <property type="term" value="P:acyl-CoA metabolic process"/>
    <property type="evidence" value="ECO:0000318"/>
    <property type="project" value="GO_Central"/>
</dbReference>
<dbReference type="GO" id="GO:0044581">
    <property type="term" value="P:butyryl-CoA catabolic process to butyrate"/>
    <property type="evidence" value="ECO:0000315"/>
    <property type="project" value="EcoCyc"/>
</dbReference>
<dbReference type="GO" id="GO:0009062">
    <property type="term" value="P:fatty acid catabolic process"/>
    <property type="evidence" value="ECO:0000318"/>
    <property type="project" value="GO_Central"/>
</dbReference>
<dbReference type="CDD" id="cd03442">
    <property type="entry name" value="BFIT_BACH"/>
    <property type="match status" value="1"/>
</dbReference>
<dbReference type="FunFam" id="3.10.129.10:FF:000008">
    <property type="entry name" value="Acyl-CoA thioester hydrolase"/>
    <property type="match status" value="1"/>
</dbReference>
<dbReference type="Gene3D" id="3.10.129.10">
    <property type="entry name" value="Hotdog Thioesterase"/>
    <property type="match status" value="1"/>
</dbReference>
<dbReference type="InterPro" id="IPR040170">
    <property type="entry name" value="Cytosol_ACT"/>
</dbReference>
<dbReference type="InterPro" id="IPR033120">
    <property type="entry name" value="HOTDOG_ACOT"/>
</dbReference>
<dbReference type="InterPro" id="IPR029069">
    <property type="entry name" value="HotDog_dom_sf"/>
</dbReference>
<dbReference type="InterPro" id="IPR006683">
    <property type="entry name" value="Thioestr_dom"/>
</dbReference>
<dbReference type="NCBIfam" id="NF007970">
    <property type="entry name" value="PRK10694.1"/>
    <property type="match status" value="1"/>
</dbReference>
<dbReference type="PANTHER" id="PTHR11049">
    <property type="entry name" value="ACYL COENZYME A THIOESTER HYDROLASE"/>
    <property type="match status" value="1"/>
</dbReference>
<dbReference type="PANTHER" id="PTHR11049:SF5">
    <property type="entry name" value="ACYL-COA THIOESTER HYDROLASE YCIA"/>
    <property type="match status" value="1"/>
</dbReference>
<dbReference type="Pfam" id="PF03061">
    <property type="entry name" value="4HBT"/>
    <property type="match status" value="1"/>
</dbReference>
<dbReference type="SUPFAM" id="SSF54637">
    <property type="entry name" value="Thioesterase/thiol ester dehydrase-isomerase"/>
    <property type="match status" value="1"/>
</dbReference>
<dbReference type="PROSITE" id="PS51770">
    <property type="entry name" value="HOTDOG_ACOT"/>
    <property type="match status" value="1"/>
</dbReference>
<reference key="1">
    <citation type="journal article" date="1985" name="Cell">
        <title>A bidirectional rho-independent transcription terminator between the E. coli tonB gene and an opposing gene.</title>
        <authorList>
            <person name="Postle K."/>
            <person name="Good R.F."/>
        </authorList>
    </citation>
    <scope>NUCLEOTIDE SEQUENCE [GENOMIC DNA]</scope>
</reference>
<reference key="2">
    <citation type="submission" date="1995-04" db="EMBL/GenBank/DDBJ databases">
        <authorList>
            <person name="Milkman R."/>
        </authorList>
    </citation>
    <scope>NUCLEOTIDE SEQUENCE [GENOMIC DNA]</scope>
    <source>
        <strain>ECOR 1</strain>
        <strain>ECOR 16</strain>
        <strain>ECOR 28</strain>
        <strain>ECOR 31</strain>
        <strain>ECOR 37</strain>
        <strain>ECOR 4</strain>
        <strain>ECOR 46</strain>
        <strain>ECOR 52</strain>
        <strain>ECOR 60</strain>
        <strain>ECOR 71</strain>
        <strain>K12</strain>
        <strain>O2:HN / ECOR 50 / P97 / UPEC</strain>
    </source>
</reference>
<reference key="3">
    <citation type="journal article" date="1996" name="DNA Res.">
        <title>A 570-kb DNA sequence of the Escherichia coli K-12 genome corresponding to the 28.0-40.1 min region on the linkage map.</title>
        <authorList>
            <person name="Aiba H."/>
            <person name="Baba T."/>
            <person name="Fujita K."/>
            <person name="Hayashi K."/>
            <person name="Inada T."/>
            <person name="Isono K."/>
            <person name="Itoh T."/>
            <person name="Kasai H."/>
            <person name="Kashimoto K."/>
            <person name="Kimura S."/>
            <person name="Kitakawa M."/>
            <person name="Kitagawa M."/>
            <person name="Makino K."/>
            <person name="Miki T."/>
            <person name="Mizobuchi K."/>
            <person name="Mori H."/>
            <person name="Mori T."/>
            <person name="Motomura K."/>
            <person name="Nakade S."/>
            <person name="Nakamura Y."/>
            <person name="Nashimoto H."/>
            <person name="Nishio Y."/>
            <person name="Oshima T."/>
            <person name="Saito N."/>
            <person name="Sampei G."/>
            <person name="Seki Y."/>
            <person name="Sivasundaram S."/>
            <person name="Tagami H."/>
            <person name="Takeda J."/>
            <person name="Takemoto K."/>
            <person name="Takeuchi Y."/>
            <person name="Wada C."/>
            <person name="Yamamoto Y."/>
            <person name="Horiuchi T."/>
        </authorList>
    </citation>
    <scope>NUCLEOTIDE SEQUENCE [LARGE SCALE GENOMIC DNA]</scope>
    <source>
        <strain>K12 / W3110 / ATCC 27325 / DSM 5911</strain>
    </source>
</reference>
<reference key="4">
    <citation type="journal article" date="1997" name="Science">
        <title>The complete genome sequence of Escherichia coli K-12.</title>
        <authorList>
            <person name="Blattner F.R."/>
            <person name="Plunkett G. III"/>
            <person name="Bloch C.A."/>
            <person name="Perna N.T."/>
            <person name="Burland V."/>
            <person name="Riley M."/>
            <person name="Collado-Vides J."/>
            <person name="Glasner J.D."/>
            <person name="Rode C.K."/>
            <person name="Mayhew G.F."/>
            <person name="Gregor J."/>
            <person name="Davis N.W."/>
            <person name="Kirkpatrick H.A."/>
            <person name="Goeden M.A."/>
            <person name="Rose D.J."/>
            <person name="Mau B."/>
            <person name="Shao Y."/>
        </authorList>
    </citation>
    <scope>NUCLEOTIDE SEQUENCE [LARGE SCALE GENOMIC DNA]</scope>
    <source>
        <strain>K12 / MG1655 / ATCC 47076</strain>
    </source>
</reference>
<reference key="5">
    <citation type="journal article" date="2006" name="Mol. Syst. Biol.">
        <title>Highly accurate genome sequences of Escherichia coli K-12 strains MG1655 and W3110.</title>
        <authorList>
            <person name="Hayashi K."/>
            <person name="Morooka N."/>
            <person name="Yamamoto Y."/>
            <person name="Fujita K."/>
            <person name="Isono K."/>
            <person name="Choi S."/>
            <person name="Ohtsubo E."/>
            <person name="Baba T."/>
            <person name="Wanner B.L."/>
            <person name="Mori H."/>
            <person name="Horiuchi T."/>
        </authorList>
    </citation>
    <scope>NUCLEOTIDE SEQUENCE [LARGE SCALE GENOMIC DNA]</scope>
    <source>
        <strain>K12 / W3110 / ATCC 27325 / DSM 5911</strain>
    </source>
</reference>
<reference key="6">
    <citation type="journal article" date="2005" name="FEMS Microbiol. Rev.">
        <title>Enzyme genomics: application of general enzymatic screens to discover new enzymes.</title>
        <authorList>
            <person name="Kuznetsova E."/>
            <person name="Proudfoot M."/>
            <person name="Sanders S.A."/>
            <person name="Reinking J."/>
            <person name="Savchenko A."/>
            <person name="Arrowsmith C.H."/>
            <person name="Edwards A.M."/>
            <person name="Yakunin A.F."/>
        </authorList>
    </citation>
    <scope>FUNCTION</scope>
</reference>
<keyword id="KW-0378">Hydrolase</keyword>
<keyword id="KW-1185">Reference proteome</keyword>
<proteinExistence type="inferred from homology"/>
<comment type="function">
    <text evidence="2">Catalyzes the hydrolysis of the thioester bond in palmitoyl-CoA and malonyl-CoA.</text>
</comment>
<comment type="similarity">
    <text evidence="3">Belongs to the acyl coenzyme A hydrolase family.</text>
</comment>
<evidence type="ECO:0000255" key="1">
    <source>
        <dbReference type="PROSITE-ProRule" id="PRU01106"/>
    </source>
</evidence>
<evidence type="ECO:0000269" key="2">
    <source>
    </source>
</evidence>
<evidence type="ECO:0000305" key="3"/>
<sequence>MSTTHNVPQGDLVLRTLAMPADTNANGDIFGGWLMSQMDIGGAILAKEIAHGRVVTVRVEGMTFLRPVAVGDVVCCYARCVQKGTTSVSINIEVWVKKVASEPIGQRYKATEALFKYVAVDPEGKPRALPVE</sequence>
<feature type="chain" id="PRO_0000053817" description="Acyl-CoA thioester hydrolase YciA">
    <location>
        <begin position="1"/>
        <end position="132"/>
    </location>
</feature>
<feature type="domain" description="HotDog ACOT-type" evidence="1">
    <location>
        <begin position="8"/>
        <end position="123"/>
    </location>
</feature>
<protein>
    <recommendedName>
        <fullName>Acyl-CoA thioester hydrolase YciA</fullName>
        <ecNumber>3.1.2.-</ecNumber>
    </recommendedName>
    <alternativeName>
        <fullName>Protein P14</fullName>
    </alternativeName>
</protein>
<organism>
    <name type="scientific">Escherichia coli (strain K12)</name>
    <dbReference type="NCBI Taxonomy" id="83333"/>
    <lineage>
        <taxon>Bacteria</taxon>
        <taxon>Pseudomonadati</taxon>
        <taxon>Pseudomonadota</taxon>
        <taxon>Gammaproteobacteria</taxon>
        <taxon>Enterobacterales</taxon>
        <taxon>Enterobacteriaceae</taxon>
        <taxon>Escherichia</taxon>
    </lineage>
</organism>
<name>YCIA_ECOLI</name>
<gene>
    <name type="primary">yciA</name>
    <name type="ordered locus">b1253</name>
    <name type="ordered locus">JW1245</name>
</gene>
<accession>P0A8Z0</accession>
<accession>P04379</accession>